<dbReference type="EMBL" id="CP000381">
    <property type="protein sequence ID" value="ABX74104.1"/>
    <property type="molecule type" value="Genomic_DNA"/>
</dbReference>
<dbReference type="RefSeq" id="WP_002215465.1">
    <property type="nucleotide sequence ID" value="NC_010120.1"/>
</dbReference>
<dbReference type="SMR" id="A9M3T6"/>
<dbReference type="GeneID" id="93387247"/>
<dbReference type="KEGG" id="nmn:NMCC_1980"/>
<dbReference type="HOGENOM" id="CLU_137929_2_1_4"/>
<dbReference type="Proteomes" id="UP000001177">
    <property type="component" value="Chromosome"/>
</dbReference>
<dbReference type="GO" id="GO:0051301">
    <property type="term" value="P:cell division"/>
    <property type="evidence" value="ECO:0007669"/>
    <property type="project" value="UniProtKB-KW"/>
</dbReference>
<dbReference type="GO" id="GO:0032955">
    <property type="term" value="P:regulation of division septum assembly"/>
    <property type="evidence" value="ECO:0007669"/>
    <property type="project" value="InterPro"/>
</dbReference>
<dbReference type="FunFam" id="3.30.1070.10:FF:000001">
    <property type="entry name" value="Cell division topological specificity factor"/>
    <property type="match status" value="1"/>
</dbReference>
<dbReference type="Gene3D" id="3.30.1070.10">
    <property type="entry name" value="Cell division topological specificity factor MinE"/>
    <property type="match status" value="1"/>
</dbReference>
<dbReference type="HAMAP" id="MF_00262">
    <property type="entry name" value="MinE"/>
    <property type="match status" value="1"/>
</dbReference>
<dbReference type="InterPro" id="IPR005527">
    <property type="entry name" value="MinE"/>
</dbReference>
<dbReference type="InterPro" id="IPR036707">
    <property type="entry name" value="MinE_sf"/>
</dbReference>
<dbReference type="NCBIfam" id="TIGR01215">
    <property type="entry name" value="minE"/>
    <property type="match status" value="1"/>
</dbReference>
<dbReference type="NCBIfam" id="NF001422">
    <property type="entry name" value="PRK00296.1"/>
    <property type="match status" value="1"/>
</dbReference>
<dbReference type="NCBIfam" id="NF010595">
    <property type="entry name" value="PRK13989.1"/>
    <property type="match status" value="1"/>
</dbReference>
<dbReference type="Pfam" id="PF03776">
    <property type="entry name" value="MinE"/>
    <property type="match status" value="1"/>
</dbReference>
<dbReference type="SUPFAM" id="SSF55229">
    <property type="entry name" value="Cell division protein MinE topological specificity domain"/>
    <property type="match status" value="1"/>
</dbReference>
<protein>
    <recommendedName>
        <fullName evidence="1">Cell division topological specificity factor</fullName>
    </recommendedName>
</protein>
<feature type="chain" id="PRO_1000078640" description="Cell division topological specificity factor">
    <location>
        <begin position="1"/>
        <end position="87"/>
    </location>
</feature>
<name>MINE_NEIM0</name>
<sequence length="87" mass="10045">MSLIEFLFGRKQKTATVARDRLQIIIAQERAQEGQAPDYLPTLRKELMEVLSKYVNVSLDNIRISQEKQDGMDVLELNITLPEQKKV</sequence>
<comment type="function">
    <text evidence="1">Prevents the cell division inhibition by proteins MinC and MinD at internal division sites while permitting inhibition at polar sites. This ensures cell division at the proper site by restricting the formation of a division septum at the midpoint of the long axis of the cell.</text>
</comment>
<comment type="similarity">
    <text evidence="1">Belongs to the MinE family.</text>
</comment>
<gene>
    <name evidence="1" type="primary">minE</name>
    <name type="ordered locus">NMCC_1980</name>
</gene>
<organism>
    <name type="scientific">Neisseria meningitidis serogroup C (strain 053442)</name>
    <dbReference type="NCBI Taxonomy" id="374833"/>
    <lineage>
        <taxon>Bacteria</taxon>
        <taxon>Pseudomonadati</taxon>
        <taxon>Pseudomonadota</taxon>
        <taxon>Betaproteobacteria</taxon>
        <taxon>Neisseriales</taxon>
        <taxon>Neisseriaceae</taxon>
        <taxon>Neisseria</taxon>
    </lineage>
</organism>
<proteinExistence type="inferred from homology"/>
<evidence type="ECO:0000255" key="1">
    <source>
        <dbReference type="HAMAP-Rule" id="MF_00262"/>
    </source>
</evidence>
<keyword id="KW-0131">Cell cycle</keyword>
<keyword id="KW-0132">Cell division</keyword>
<reference key="1">
    <citation type="journal article" date="2008" name="Genomics">
        <title>Characterization of ST-4821 complex, a unique Neisseria meningitidis clone.</title>
        <authorList>
            <person name="Peng J."/>
            <person name="Yang L."/>
            <person name="Yang F."/>
            <person name="Yang J."/>
            <person name="Yan Y."/>
            <person name="Nie H."/>
            <person name="Zhang X."/>
            <person name="Xiong Z."/>
            <person name="Jiang Y."/>
            <person name="Cheng F."/>
            <person name="Xu X."/>
            <person name="Chen S."/>
            <person name="Sun L."/>
            <person name="Li W."/>
            <person name="Shen Y."/>
            <person name="Shao Z."/>
            <person name="Liang X."/>
            <person name="Xu J."/>
            <person name="Jin Q."/>
        </authorList>
    </citation>
    <scope>NUCLEOTIDE SEQUENCE [LARGE SCALE GENOMIC DNA]</scope>
    <source>
        <strain>053442</strain>
    </source>
</reference>
<accession>A9M3T6</accession>